<reference key="1">
    <citation type="journal article" date="2003" name="Mol. Cell">
        <title>Functional genomic analysis of apoptotic DNA degradation in C. elegans.</title>
        <authorList>
            <person name="Parrish J.Z."/>
            <person name="Xue D."/>
        </authorList>
    </citation>
    <scope>NUCLEOTIDE SEQUENCE [MRNA]</scope>
    <scope>FUNCTION</scope>
    <scope>INTERACTION WITH CRN-5; CRN-1; CPS-6 AND CYN-13</scope>
    <scope>DISRUPTION PHENOTYPE</scope>
</reference>
<reference key="2">
    <citation type="journal article" date="1998" name="Science">
        <title>Genome sequence of the nematode C. elegans: a platform for investigating biology.</title>
        <authorList>
            <consortium name="The C. elegans sequencing consortium"/>
        </authorList>
    </citation>
    <scope>NUCLEOTIDE SEQUENCE [LARGE SCALE GENOMIC DNA]</scope>
    <source>
        <strain>Bristol N2</strain>
    </source>
</reference>
<reference key="3">
    <citation type="journal article" date="2010" name="RNA">
        <title>Structural and biochemical characterization of CRN-5 and Rrp46: an exosome component participating in apoptotic DNA degradation.</title>
        <authorList>
            <person name="Yang C.C."/>
            <person name="Wang Y.T."/>
            <person name="Hsiao Y.Y."/>
            <person name="Doudeva L.G."/>
            <person name="Kuo P.H."/>
            <person name="Chow S.Y."/>
            <person name="Yuan H.S."/>
        </authorList>
    </citation>
    <scope>INTERACTION WITH CRN-5</scope>
</reference>
<reference evidence="6 7 8" key="4">
    <citation type="journal article" date="2009" name="Mol. Cell. Biol.">
        <title>Crystal structure of CRN-4: implications for domain function in apoptotic DNA degradation.</title>
        <authorList>
            <person name="Hsiao Y.Y."/>
            <person name="Nakagawa A."/>
            <person name="Shi Z."/>
            <person name="Mitani S."/>
            <person name="Xue D."/>
            <person name="Yuan H.S."/>
        </authorList>
    </citation>
    <scope>X-RAY CRYSTALLOGRAPHY (2.50 ANGSTROMS) IN COMPLEX WITH MN(2+) AND ZN(2+)</scope>
    <scope>FUNCTION</scope>
    <scope>COFACTOR</scope>
    <scope>BIOPHYSICOCHEMICAL PROPERTIES</scope>
    <scope>SUBUNIT</scope>
    <scope>MUTAGENESIS OF ASP-15; GLU-17; ASP-115; HIS-179 AND ASP-184</scope>
</reference>
<reference evidence="9" key="5">
    <citation type="journal article" date="2016" name="J. Med. Chem.">
        <title>Identification of Inhibitors for the DEDDh Family of Exonucleases and a Unique Inhibition Mechanism by Crystal Structure Analysis of CRN-4 Bound with 2-Morpholin-4-ylethanesulfonate (MES).</title>
        <authorList>
            <person name="Huang K.W."/>
            <person name="Hsu K.C."/>
            <person name="Chu L.Y."/>
            <person name="Yang J.M."/>
            <person name="Yuan H.S."/>
            <person name="Hsiao Y.Y."/>
        </authorList>
    </citation>
    <scope>X-RAY CRYSTALLOGRAPHY (2.10 ANGSTROMS) IN COMPLEX WITH MG(2+); ZN(2+) AND SYNTHETIC INHIBITOR</scope>
    <scope>FUNCTION</scope>
    <scope>COFACTOR</scope>
    <scope>ACTIVITY REGULATION</scope>
</reference>
<dbReference type="EC" id="3.1.-.-"/>
<dbReference type="EMBL" id="AY303578">
    <property type="protein sequence ID" value="AAP57300.1"/>
    <property type="molecule type" value="mRNA"/>
</dbReference>
<dbReference type="EMBL" id="FO080097">
    <property type="protein sequence ID" value="CCD61184.1"/>
    <property type="molecule type" value="Genomic_DNA"/>
</dbReference>
<dbReference type="PIR" id="T30086">
    <property type="entry name" value="T30086"/>
</dbReference>
<dbReference type="RefSeq" id="NP_508415.1">
    <property type="nucleotide sequence ID" value="NM_076014.5"/>
</dbReference>
<dbReference type="PDB" id="3CG7">
    <property type="method" value="X-ray"/>
    <property type="resolution" value="2.50 A"/>
    <property type="chains" value="A/B=1-298"/>
</dbReference>
<dbReference type="PDB" id="3CM5">
    <property type="method" value="X-ray"/>
    <property type="resolution" value="2.81 A"/>
    <property type="chains" value="A/B=1-298"/>
</dbReference>
<dbReference type="PDB" id="3CM6">
    <property type="method" value="X-ray"/>
    <property type="resolution" value="2.60 A"/>
    <property type="chains" value="A/B=1-298"/>
</dbReference>
<dbReference type="PDB" id="5DK5">
    <property type="method" value="X-ray"/>
    <property type="resolution" value="2.10 A"/>
    <property type="chains" value="A/B=1-298"/>
</dbReference>
<dbReference type="PDBsum" id="3CG7"/>
<dbReference type="PDBsum" id="3CM5"/>
<dbReference type="PDBsum" id="3CM6"/>
<dbReference type="PDBsum" id="5DK5"/>
<dbReference type="SMR" id="Q10905"/>
<dbReference type="BioGRID" id="45481">
    <property type="interactions" value="7"/>
</dbReference>
<dbReference type="FunCoup" id="Q10905">
    <property type="interactions" value="12"/>
</dbReference>
<dbReference type="STRING" id="6239.AH9.2.1"/>
<dbReference type="ChEMBL" id="CHEMBL3879829"/>
<dbReference type="PaxDb" id="6239-AH9.2"/>
<dbReference type="PeptideAtlas" id="Q10905"/>
<dbReference type="EnsemblMetazoa" id="AH9.2.1">
    <property type="protein sequence ID" value="AH9.2.1"/>
    <property type="gene ID" value="WBGene00000797"/>
</dbReference>
<dbReference type="GeneID" id="180536"/>
<dbReference type="KEGG" id="cel:CELE_AH9.2"/>
<dbReference type="UCSC" id="AH9.2">
    <property type="organism name" value="c. elegans"/>
</dbReference>
<dbReference type="AGR" id="WB:WBGene00000797"/>
<dbReference type="CTD" id="180536"/>
<dbReference type="WormBase" id="AH9.2">
    <property type="protein sequence ID" value="CE03858"/>
    <property type="gene ID" value="WBGene00000797"/>
    <property type="gene designation" value="crn-4"/>
</dbReference>
<dbReference type="eggNOG" id="KOG0542">
    <property type="taxonomic scope" value="Eukaryota"/>
</dbReference>
<dbReference type="GeneTree" id="ENSGT00530000063205"/>
<dbReference type="HOGENOM" id="CLU_037266_4_3_1"/>
<dbReference type="InParanoid" id="Q10905"/>
<dbReference type="OMA" id="TIVYART"/>
<dbReference type="OrthoDB" id="5775694at2759"/>
<dbReference type="PhylomeDB" id="Q10905"/>
<dbReference type="EvolutionaryTrace" id="Q10905"/>
<dbReference type="PRO" id="PR:Q10905"/>
<dbReference type="Proteomes" id="UP000001940">
    <property type="component" value="Chromosome X"/>
</dbReference>
<dbReference type="Bgee" id="WBGene00000797">
    <property type="expression patterns" value="Expressed in embryo and 4 other cell types or tissues"/>
</dbReference>
<dbReference type="GO" id="GO:0005737">
    <property type="term" value="C:cytoplasm"/>
    <property type="evidence" value="ECO:0000318"/>
    <property type="project" value="GO_Central"/>
</dbReference>
<dbReference type="GO" id="GO:0008408">
    <property type="term" value="F:3'-5' exonuclease activity"/>
    <property type="evidence" value="ECO:0000314"/>
    <property type="project" value="WormBase"/>
</dbReference>
<dbReference type="GO" id="GO:0000175">
    <property type="term" value="F:3'-5'-RNA exonuclease activity"/>
    <property type="evidence" value="ECO:0000318"/>
    <property type="project" value="GO_Central"/>
</dbReference>
<dbReference type="GO" id="GO:0004520">
    <property type="term" value="F:DNA endonuclease activity"/>
    <property type="evidence" value="ECO:0000314"/>
    <property type="project" value="WormBase"/>
</dbReference>
<dbReference type="GO" id="GO:0004536">
    <property type="term" value="F:DNA nuclease activity"/>
    <property type="evidence" value="ECO:0000314"/>
    <property type="project" value="WormBase"/>
</dbReference>
<dbReference type="GO" id="GO:0046872">
    <property type="term" value="F:metal ion binding"/>
    <property type="evidence" value="ECO:0007669"/>
    <property type="project" value="UniProtKB-KW"/>
</dbReference>
<dbReference type="GO" id="GO:0004540">
    <property type="term" value="F:RNA nuclease activity"/>
    <property type="evidence" value="ECO:0000314"/>
    <property type="project" value="WormBase"/>
</dbReference>
<dbReference type="GO" id="GO:0003697">
    <property type="term" value="F:single-stranded DNA binding"/>
    <property type="evidence" value="ECO:0000314"/>
    <property type="project" value="WormBase"/>
</dbReference>
<dbReference type="GO" id="GO:0006309">
    <property type="term" value="P:apoptotic DNA fragmentation"/>
    <property type="evidence" value="ECO:0000314"/>
    <property type="project" value="WormBase"/>
</dbReference>
<dbReference type="GO" id="GO:0006308">
    <property type="term" value="P:DNA catabolic process"/>
    <property type="evidence" value="ECO:0000314"/>
    <property type="project" value="WormBase"/>
</dbReference>
<dbReference type="GO" id="GO:0000467">
    <property type="term" value="P:exonucleolytic trimming to generate mature 3'-end of 5.8S rRNA from tricistronic rRNA transcript (SSU-rRNA, 5.8S rRNA, LSU-rRNA)"/>
    <property type="evidence" value="ECO:0000318"/>
    <property type="project" value="GO_Central"/>
</dbReference>
<dbReference type="GO" id="GO:0006401">
    <property type="term" value="P:RNA catabolic process"/>
    <property type="evidence" value="ECO:0000314"/>
    <property type="project" value="WormBase"/>
</dbReference>
<dbReference type="CDD" id="cd06133">
    <property type="entry name" value="ERI-1_3'hExo_like"/>
    <property type="match status" value="1"/>
</dbReference>
<dbReference type="FunFam" id="3.30.420.10:FF:000157">
    <property type="entry name" value="Cell death-related nuclease 4"/>
    <property type="match status" value="1"/>
</dbReference>
<dbReference type="Gene3D" id="3.30.420.10">
    <property type="entry name" value="Ribonuclease H-like superfamily/Ribonuclease H"/>
    <property type="match status" value="1"/>
</dbReference>
<dbReference type="InterPro" id="IPR051274">
    <property type="entry name" value="3-5_Exoribonuclease"/>
</dbReference>
<dbReference type="InterPro" id="IPR047201">
    <property type="entry name" value="ERI-1_3'hExo-like"/>
</dbReference>
<dbReference type="InterPro" id="IPR013520">
    <property type="entry name" value="Exonuclease_RNaseT/DNA_pol3"/>
</dbReference>
<dbReference type="InterPro" id="IPR012337">
    <property type="entry name" value="RNaseH-like_sf"/>
</dbReference>
<dbReference type="InterPro" id="IPR036397">
    <property type="entry name" value="RNaseH_sf"/>
</dbReference>
<dbReference type="PANTHER" id="PTHR23044">
    <property type="entry name" value="3'-5' EXONUCLEASE ERI1-RELATED"/>
    <property type="match status" value="1"/>
</dbReference>
<dbReference type="PANTHER" id="PTHR23044:SF4">
    <property type="entry name" value="CELL DEATH-RELATED NUCLEASE 4"/>
    <property type="match status" value="1"/>
</dbReference>
<dbReference type="Pfam" id="PF00929">
    <property type="entry name" value="RNase_T"/>
    <property type="match status" value="1"/>
</dbReference>
<dbReference type="SMART" id="SM00479">
    <property type="entry name" value="EXOIII"/>
    <property type="match status" value="1"/>
</dbReference>
<dbReference type="SUPFAM" id="SSF53098">
    <property type="entry name" value="Ribonuclease H-like"/>
    <property type="match status" value="1"/>
</dbReference>
<sequence>MAYQHCPFDTLLILDFETTSDAANQDYPCEVIQFAIVAYDVPNDKIREDISFNKYVKPVLNRTLTKNCVDFTGIPQRSIDTADTFDVVYEQFQQWLITLGLEEGKFAFVCDSRQDLWRIAQYQMKLSNIQMPAFFRQYINLYKIFTNEMDRMGPKELSATTNIGKMNEYYDLPTIGRAHDAMDDCLNIATILQRMINMGAKVTVNELLTCCASWRRQPLVYNKEWRSSFMDAGKIFERVLPLVVTTIRAGDFRLEMYGVCRYCRKGMDVCGTSHQQTPHDLYKNEEDPIHFAKIAGYY</sequence>
<keyword id="KW-0002">3D-structure</keyword>
<keyword id="KW-0053">Apoptosis</keyword>
<keyword id="KW-0269">Exonuclease</keyword>
<keyword id="KW-0378">Hydrolase</keyword>
<keyword id="KW-0460">Magnesium</keyword>
<keyword id="KW-0479">Metal-binding</keyword>
<keyword id="KW-0540">Nuclease</keyword>
<keyword id="KW-1185">Reference proteome</keyword>
<keyword id="KW-0862">Zinc</keyword>
<evidence type="ECO:0000255" key="1"/>
<evidence type="ECO:0000269" key="2">
    <source>
    </source>
</evidence>
<evidence type="ECO:0000269" key="3">
    <source>
    </source>
</evidence>
<evidence type="ECO:0000269" key="4">
    <source>
    </source>
</evidence>
<evidence type="ECO:0000269" key="5">
    <source>
    </source>
</evidence>
<evidence type="ECO:0007744" key="6">
    <source>
        <dbReference type="PDB" id="3CG7"/>
    </source>
</evidence>
<evidence type="ECO:0007744" key="7">
    <source>
        <dbReference type="PDB" id="3CM5"/>
    </source>
</evidence>
<evidence type="ECO:0007744" key="8">
    <source>
        <dbReference type="PDB" id="3CM6"/>
    </source>
</evidence>
<evidence type="ECO:0007744" key="9">
    <source>
        <dbReference type="PDB" id="5DK5"/>
    </source>
</evidence>
<evidence type="ECO:0007829" key="10">
    <source>
        <dbReference type="PDB" id="3CG7"/>
    </source>
</evidence>
<evidence type="ECO:0007829" key="11">
    <source>
        <dbReference type="PDB" id="5DK5"/>
    </source>
</evidence>
<gene>
    <name type="primary">crn-4</name>
    <name type="ORF">AH9.2</name>
</gene>
<comment type="function">
    <text evidence="2 3 5">Possesses 3'-&gt;5' exoribonuclease activity in digestion of DNA and RNA (PubMed:18981218, PubMed:27529560). Cleaves nucleic acid substrates with efficiencies in the following order: single-stranded RNA (ssRNA) &gt; double-stranded DNA (dsDNA) &gt; single-stranded DNA (ssDNA) (PubMed:18981218, PubMed:27529560). Involved in apoptotic DNA degradation (PubMed:12718884, PubMed:18981218).</text>
</comment>
<comment type="cofactor">
    <cofactor evidence="3 5 9">
        <name>Mg(2+)</name>
        <dbReference type="ChEBI" id="CHEBI:18420"/>
    </cofactor>
    <text evidence="3 7">Probably binds Mg(2+) in vivo, Mn(2+) ions are found in the crystal structure.</text>
</comment>
<comment type="activity regulation">
    <text evidence="5">Exonuclease activity is inhibited in vitro by pontacyl violet 6R (PV6R), p-chloromercuriphenyl sulfonate (PCMPS), 5,5'-dithiobis(2-nitrobenzoic acid) (DTNB), aurintricarboxylic acid (ATA), 2-morpholin-4-ylethanesulfonate (MES), 4-[(4,6-dichloro-1,3,5-triazin-2-yl)amino]-2-(3-hydroxy-6-oxoxanthen-9-yl)benzoic acid (DR396) and fmoc-d-Cha-OH (FDCO). Interaction with ssRNA is reduced in vitro by PV6R.</text>
</comment>
<comment type="biophysicochemical properties">
    <phDependence>
        <text evidence="3">Optimum pH is 7.5 for DNase activity. Most efficient at pH 6.5 to 9.0. Reduced DNase activity in acidic conditions at pH 5.5 to 6.5 or in basic conditions at pH 9.5 to 10.0.</text>
    </phDependence>
</comment>
<comment type="subunit">
    <text evidence="2 3 4">Homodimer (via C-terminus) (PubMed:18981218). Interacts with crn-5; interaction promotes the DNase activity of crn-4 (PubMed:12718884, PubMed:20660080). Interacts with cps-6, crn-1 and cyn-13 (PubMed:12718884).</text>
</comment>
<comment type="disruption phenotype">
    <text evidence="2">RNAi-mediated knockdown results in accumulation of apoptotic DNA in 1.5-fold stage embryos and delayed appearance of embryonic cell corpses during development.</text>
</comment>
<protein>
    <recommendedName>
        <fullName>3'-5' exonuclease crn-4</fullName>
        <ecNumber>3.1.-.-</ecNumber>
    </recommendedName>
    <alternativeName>
        <fullName>Cell death-related nuclease 4</fullName>
    </alternativeName>
</protein>
<name>CRN4_CAEEL</name>
<feature type="chain" id="PRO_0000021003" description="3'-5' exonuclease crn-4">
    <location>
        <begin position="1"/>
        <end position="298"/>
    </location>
</feature>
<feature type="domain" description="Exonuclease" evidence="1">
    <location>
        <begin position="12"/>
        <end position="192"/>
    </location>
</feature>
<feature type="binding site" evidence="5 9">
    <location>
        <position position="15"/>
    </location>
    <ligand>
        <name>Mg(2+)</name>
        <dbReference type="ChEBI" id="CHEBI:18420"/>
    </ligand>
</feature>
<feature type="binding site" evidence="5 9">
    <location>
        <position position="17"/>
    </location>
    <ligand>
        <name>Mg(2+)</name>
        <dbReference type="ChEBI" id="CHEBI:18420"/>
    </ligand>
</feature>
<feature type="binding site" evidence="5 9">
    <location>
        <position position="184"/>
    </location>
    <ligand>
        <name>Mg(2+)</name>
        <dbReference type="ChEBI" id="CHEBI:18420"/>
    </ligand>
</feature>
<feature type="binding site" evidence="3 5 6 7 8 9">
    <location>
        <position position="210"/>
    </location>
    <ligand>
        <name>Zn(2+)</name>
        <dbReference type="ChEBI" id="CHEBI:29105"/>
    </ligand>
</feature>
<feature type="binding site" evidence="3 5 6 7 8 9">
    <location>
        <position position="260"/>
    </location>
    <ligand>
        <name>Zn(2+)</name>
        <dbReference type="ChEBI" id="CHEBI:29105"/>
    </ligand>
</feature>
<feature type="binding site" evidence="3 5 6 7 8 9">
    <location>
        <position position="263"/>
    </location>
    <ligand>
        <name>Zn(2+)</name>
        <dbReference type="ChEBI" id="CHEBI:29105"/>
    </ligand>
</feature>
<feature type="binding site" evidence="3 5 6 7 8 9">
    <location>
        <position position="270"/>
    </location>
    <ligand>
        <name>Zn(2+)</name>
        <dbReference type="ChEBI" id="CHEBI:29105"/>
    </ligand>
</feature>
<feature type="mutagenesis site" description="Reduces DNase activity; when associated with A-17. Abolishes DNase activity; when associated with A-17 and A-115." evidence="3">
    <original>D</original>
    <variation>A</variation>
    <location>
        <position position="15"/>
    </location>
</feature>
<feature type="mutagenesis site" description="Reduces DNase activity; when associated with A-15. Abolishes DNase activity; when associated with A-15 and A-115." evidence="3">
    <original>E</original>
    <variation>A</variation>
    <location>
        <position position="17"/>
    </location>
</feature>
<feature type="mutagenesis site" description="Reduces DNase activity. Abolishes DNase activity; when associated with A-15 and A-17." evidence="3">
    <original>D</original>
    <variation>A</variation>
    <location>
        <position position="115"/>
    </location>
</feature>
<feature type="mutagenesis site" description="Reduces DNase activity." evidence="3">
    <original>H</original>
    <variation>A</variation>
    <location>
        <position position="179"/>
    </location>
</feature>
<feature type="mutagenesis site" description="Reduces DNase activity." evidence="3">
    <original>D</original>
    <variation>A</variation>
    <location>
        <position position="184"/>
    </location>
</feature>
<feature type="strand" evidence="11">
    <location>
        <begin position="9"/>
        <end position="18"/>
    </location>
</feature>
<feature type="strand" evidence="11">
    <location>
        <begin position="31"/>
        <end position="40"/>
    </location>
</feature>
<feature type="turn" evidence="11">
    <location>
        <begin position="41"/>
        <end position="44"/>
    </location>
</feature>
<feature type="strand" evidence="11">
    <location>
        <begin position="45"/>
        <end position="56"/>
    </location>
</feature>
<feature type="strand" evidence="11">
    <location>
        <begin position="59"/>
        <end position="61"/>
    </location>
</feature>
<feature type="helix" evidence="11">
    <location>
        <begin position="66"/>
        <end position="72"/>
    </location>
</feature>
<feature type="helix" evidence="11">
    <location>
        <begin position="76"/>
        <end position="80"/>
    </location>
</feature>
<feature type="strand" evidence="10">
    <location>
        <begin position="82"/>
        <end position="84"/>
    </location>
</feature>
<feature type="helix" evidence="11">
    <location>
        <begin position="85"/>
        <end position="98"/>
    </location>
</feature>
<feature type="strand" evidence="11">
    <location>
        <begin position="105"/>
        <end position="113"/>
    </location>
</feature>
<feature type="helix" evidence="11">
    <location>
        <begin position="114"/>
        <end position="117"/>
    </location>
</feature>
<feature type="helix" evidence="11">
    <location>
        <begin position="119"/>
        <end position="127"/>
    </location>
</feature>
<feature type="helix" evidence="11">
    <location>
        <begin position="133"/>
        <end position="135"/>
    </location>
</feature>
<feature type="strand" evidence="11">
    <location>
        <begin position="136"/>
        <end position="140"/>
    </location>
</feature>
<feature type="helix" evidence="11">
    <location>
        <begin position="141"/>
        <end position="147"/>
    </location>
</feature>
<feature type="helix" evidence="11">
    <location>
        <begin position="149"/>
        <end position="152"/>
    </location>
</feature>
<feature type="helix" evidence="11">
    <location>
        <begin position="162"/>
        <end position="169"/>
    </location>
</feature>
<feature type="strand" evidence="11">
    <location>
        <begin position="177"/>
        <end position="180"/>
    </location>
</feature>
<feature type="helix" evidence="11">
    <location>
        <begin position="181"/>
        <end position="197"/>
    </location>
</feature>
<feature type="strand" evidence="11">
    <location>
        <begin position="206"/>
        <end position="210"/>
    </location>
</feature>
<feature type="helix" evidence="11">
    <location>
        <begin position="213"/>
        <end position="215"/>
    </location>
</feature>
<feature type="helix" evidence="11">
    <location>
        <begin position="225"/>
        <end position="227"/>
    </location>
</feature>
<feature type="helix" evidence="11">
    <location>
        <begin position="229"/>
        <end position="239"/>
    </location>
</feature>
<feature type="strand" evidence="11">
    <location>
        <begin position="243"/>
        <end position="246"/>
    </location>
</feature>
<feature type="turn" evidence="11">
    <location>
        <begin position="249"/>
        <end position="251"/>
    </location>
</feature>
<feature type="helix" evidence="11">
    <location>
        <begin position="254"/>
        <end position="256"/>
    </location>
</feature>
<feature type="turn" evidence="11">
    <location>
        <begin position="261"/>
        <end position="263"/>
    </location>
</feature>
<feature type="turn" evidence="11">
    <location>
        <begin position="267"/>
        <end position="271"/>
    </location>
</feature>
<feature type="helix" evidence="11">
    <location>
        <begin position="279"/>
        <end position="282"/>
    </location>
</feature>
<feature type="helix" evidence="11">
    <location>
        <begin position="290"/>
        <end position="295"/>
    </location>
</feature>
<accession>Q10905</accession>
<proteinExistence type="evidence at protein level"/>
<organism>
    <name type="scientific">Caenorhabditis elegans</name>
    <dbReference type="NCBI Taxonomy" id="6239"/>
    <lineage>
        <taxon>Eukaryota</taxon>
        <taxon>Metazoa</taxon>
        <taxon>Ecdysozoa</taxon>
        <taxon>Nematoda</taxon>
        <taxon>Chromadorea</taxon>
        <taxon>Rhabditida</taxon>
        <taxon>Rhabditina</taxon>
        <taxon>Rhabditomorpha</taxon>
        <taxon>Rhabditoidea</taxon>
        <taxon>Rhabditidae</taxon>
        <taxon>Peloderinae</taxon>
        <taxon>Caenorhabditis</taxon>
    </lineage>
</organism>